<proteinExistence type="evidence at transcript level"/>
<protein>
    <recommendedName>
        <fullName>Mitochondrial import inner membrane translocase subunit Tim22</fullName>
    </recommendedName>
</protein>
<dbReference type="EMBL" id="BC084949">
    <property type="protein sequence ID" value="AAH84949.1"/>
    <property type="molecule type" value="mRNA"/>
</dbReference>
<dbReference type="RefSeq" id="NP_001088555.2">
    <property type="nucleotide sequence ID" value="NM_001095086.1"/>
</dbReference>
<dbReference type="SMR" id="Q5U4U5"/>
<dbReference type="DNASU" id="495431"/>
<dbReference type="GeneID" id="108709182"/>
<dbReference type="AGR" id="Xenbase:XB-GENE-6253845"/>
<dbReference type="CTD" id="108709182"/>
<dbReference type="Xenbase" id="XB-GENE-6253845">
    <property type="gene designation" value="timm22.S"/>
</dbReference>
<dbReference type="OrthoDB" id="75343at2759"/>
<dbReference type="Proteomes" id="UP000186698">
    <property type="component" value="Unplaced"/>
</dbReference>
<dbReference type="GO" id="GO:0042721">
    <property type="term" value="C:TIM22 mitochondrial import inner membrane insertion complex"/>
    <property type="evidence" value="ECO:0000250"/>
    <property type="project" value="UniProtKB"/>
</dbReference>
<dbReference type="GO" id="GO:0030943">
    <property type="term" value="F:mitochondrion targeting sequence binding"/>
    <property type="evidence" value="ECO:0000318"/>
    <property type="project" value="GO_Central"/>
</dbReference>
<dbReference type="GO" id="GO:0008320">
    <property type="term" value="F:protein transmembrane transporter activity"/>
    <property type="evidence" value="ECO:0000318"/>
    <property type="project" value="GO_Central"/>
</dbReference>
<dbReference type="GO" id="GO:0045039">
    <property type="term" value="P:protein insertion into mitochondrial inner membrane"/>
    <property type="evidence" value="ECO:0000250"/>
    <property type="project" value="UniProtKB"/>
</dbReference>
<dbReference type="InterPro" id="IPR039175">
    <property type="entry name" value="TIM22"/>
</dbReference>
<dbReference type="PANTHER" id="PTHR14110">
    <property type="entry name" value="MITOCHONDRIAL IMPORT INNER MEMBRANE TRANSLOCASE SUBUNIT TIM22"/>
    <property type="match status" value="1"/>
</dbReference>
<dbReference type="PANTHER" id="PTHR14110:SF0">
    <property type="entry name" value="MITOCHONDRIAL IMPORT INNER MEMBRANE TRANSLOCASE SUBUNIT TIM22"/>
    <property type="match status" value="1"/>
</dbReference>
<dbReference type="Pfam" id="PF02466">
    <property type="entry name" value="Tim17"/>
    <property type="match status" value="1"/>
</dbReference>
<name>TIM22_XENLA</name>
<feature type="chain" id="PRO_0000228082" description="Mitochondrial import inner membrane translocase subunit Tim22">
    <location>
        <begin position="1"/>
        <end position="184"/>
    </location>
</feature>
<feature type="transmembrane region" description="Helical" evidence="3">
    <location>
        <begin position="64"/>
        <end position="84"/>
    </location>
</feature>
<feature type="transmembrane region" description="Helical" evidence="3">
    <location>
        <begin position="115"/>
        <end position="133"/>
    </location>
</feature>
<feature type="transmembrane region" description="Helical" evidence="3">
    <location>
        <begin position="160"/>
        <end position="180"/>
    </location>
</feature>
<feature type="disulfide bond" evidence="2">
    <location>
        <begin position="59"/>
        <end position="131"/>
    </location>
</feature>
<feature type="disulfide bond" evidence="2">
    <location>
        <begin position="150"/>
        <end position="169"/>
    </location>
</feature>
<organism>
    <name type="scientific">Xenopus laevis</name>
    <name type="common">African clawed frog</name>
    <dbReference type="NCBI Taxonomy" id="8355"/>
    <lineage>
        <taxon>Eukaryota</taxon>
        <taxon>Metazoa</taxon>
        <taxon>Chordata</taxon>
        <taxon>Craniata</taxon>
        <taxon>Vertebrata</taxon>
        <taxon>Euteleostomi</taxon>
        <taxon>Amphibia</taxon>
        <taxon>Batrachia</taxon>
        <taxon>Anura</taxon>
        <taxon>Pipoidea</taxon>
        <taxon>Pipidae</taxon>
        <taxon>Xenopodinae</taxon>
        <taxon>Xenopus</taxon>
        <taxon>Xenopus</taxon>
    </lineage>
</organism>
<gene>
    <name type="primary">timm22</name>
    <name type="synonym">tim22</name>
</gene>
<comment type="function">
    <text evidence="1">Essential core component of the TIM22 complex, a complex that mediates the import and insertion of multi-pass transmembrane proteins into the mitochondrial inner membrane. In the TIM22 complex, it constitutes the voltage-activated and signal-gated channel. Forms a twin-pore translocase that uses the membrane potential as external driving force in 2 voltage-dependent steps (By similarity).</text>
</comment>
<comment type="subunit">
    <text evidence="2">Core component of the TIM22 complex.</text>
</comment>
<comment type="subcellular location">
    <subcellularLocation>
        <location evidence="2">Mitochondrion inner membrane</location>
        <topology evidence="3">Multi-pass membrane protein</topology>
    </subcellularLocation>
</comment>
<comment type="similarity">
    <text evidence="4">Belongs to the Tim17/Tim22/Tim23 family.</text>
</comment>
<sequence length="184" mass="19389">MGSNVTPPGDGTLQYSLIMQHLVGDKRRPVELIPGGLGGIPTPIKPEEQKMMERVMESCGFKAALACVGGFVLGGAFGVFTAGIDTNVGFDPKDPLRTPTAKEVLRDMGQRGMSYAKNFAIVGAMFSCTECLVESYRGKSDWKNSVMSGCITGGAIGFRAGLKAGVLGCGGFAAFSAVIDYYLR</sequence>
<reference key="1">
    <citation type="submission" date="2004-10" db="EMBL/GenBank/DDBJ databases">
        <authorList>
            <consortium name="NIH - Xenopus Gene Collection (XGC) project"/>
        </authorList>
    </citation>
    <scope>NUCLEOTIDE SEQUENCE [LARGE SCALE MRNA]</scope>
    <source>
        <tissue>Embryo</tissue>
    </source>
</reference>
<evidence type="ECO:0000250" key="1">
    <source>
        <dbReference type="UniProtKB" id="Q12328"/>
    </source>
</evidence>
<evidence type="ECO:0000250" key="2">
    <source>
        <dbReference type="UniProtKB" id="Q9Y584"/>
    </source>
</evidence>
<evidence type="ECO:0000255" key="3"/>
<evidence type="ECO:0000305" key="4"/>
<keyword id="KW-1015">Disulfide bond</keyword>
<keyword id="KW-0472">Membrane</keyword>
<keyword id="KW-0496">Mitochondrion</keyword>
<keyword id="KW-0999">Mitochondrion inner membrane</keyword>
<keyword id="KW-0653">Protein transport</keyword>
<keyword id="KW-1185">Reference proteome</keyword>
<keyword id="KW-0811">Translocation</keyword>
<keyword id="KW-0812">Transmembrane</keyword>
<keyword id="KW-1133">Transmembrane helix</keyword>
<keyword id="KW-0813">Transport</keyword>
<accession>Q5U4U5</accession>